<evidence type="ECO:0000255" key="1">
    <source>
        <dbReference type="HAMAP-Rule" id="MF_00102"/>
    </source>
</evidence>
<evidence type="ECO:0000305" key="2"/>
<organism>
    <name type="scientific">Salmonella dublin (strain CT_02021853)</name>
    <dbReference type="NCBI Taxonomy" id="439851"/>
    <lineage>
        <taxon>Bacteria</taxon>
        <taxon>Pseudomonadati</taxon>
        <taxon>Pseudomonadota</taxon>
        <taxon>Gammaproteobacteria</taxon>
        <taxon>Enterobacterales</taxon>
        <taxon>Enterobacteriaceae</taxon>
        <taxon>Salmonella</taxon>
    </lineage>
</organism>
<feature type="chain" id="PRO_1000093995" description="4-hydroxy-tetrahydrodipicolinate reductase">
    <location>
        <begin position="1"/>
        <end position="273"/>
    </location>
</feature>
<feature type="active site" description="Proton donor/acceptor" evidence="1">
    <location>
        <position position="159"/>
    </location>
</feature>
<feature type="active site" description="Proton donor" evidence="1">
    <location>
        <position position="163"/>
    </location>
</feature>
<feature type="binding site" evidence="1">
    <location>
        <begin position="12"/>
        <end position="17"/>
    </location>
    <ligand>
        <name>NAD(+)</name>
        <dbReference type="ChEBI" id="CHEBI:57540"/>
    </ligand>
</feature>
<feature type="binding site" evidence="1">
    <location>
        <position position="38"/>
    </location>
    <ligand>
        <name>NAD(+)</name>
        <dbReference type="ChEBI" id="CHEBI:57540"/>
    </ligand>
</feature>
<feature type="binding site" evidence="1">
    <location>
        <position position="39"/>
    </location>
    <ligand>
        <name>NADP(+)</name>
        <dbReference type="ChEBI" id="CHEBI:58349"/>
    </ligand>
</feature>
<feature type="binding site" evidence="1">
    <location>
        <begin position="102"/>
        <end position="104"/>
    </location>
    <ligand>
        <name>NAD(+)</name>
        <dbReference type="ChEBI" id="CHEBI:57540"/>
    </ligand>
</feature>
<feature type="binding site" evidence="1">
    <location>
        <begin position="126"/>
        <end position="129"/>
    </location>
    <ligand>
        <name>NAD(+)</name>
        <dbReference type="ChEBI" id="CHEBI:57540"/>
    </ligand>
</feature>
<feature type="binding site" evidence="1">
    <location>
        <position position="160"/>
    </location>
    <ligand>
        <name>(S)-2,3,4,5-tetrahydrodipicolinate</name>
        <dbReference type="ChEBI" id="CHEBI:16845"/>
    </ligand>
</feature>
<feature type="binding site" evidence="1">
    <location>
        <begin position="169"/>
        <end position="170"/>
    </location>
    <ligand>
        <name>(S)-2,3,4,5-tetrahydrodipicolinate</name>
        <dbReference type="ChEBI" id="CHEBI:16845"/>
    </ligand>
</feature>
<sequence>MHEAQIRVAIAGAGGRMGRQLIQAAMAMEGVQLGAALEREGSSLLGSDAGELAGAGKSGVIVQSSLEAVKDDFDVFIDFTRPEGTLTHLAFCRQHGKGMVIGTTGFDDAGKQAIREASQEIAIVFAANFSVGVNVMLKLLEKAAKVMGDYSDIEIIEAHHRHKVDAPSGTALAMGEAIAGALDKDLKDCAVYSREGYTGERVPGTIGFATVRAGDIVGEHTAMFADIGERVEITHKASSRMTFANGALRSALWLKTKKNGLFDMRDVLGLDVL</sequence>
<dbReference type="EC" id="1.17.1.8" evidence="1"/>
<dbReference type="EMBL" id="CP001144">
    <property type="protein sequence ID" value="ACH74385.1"/>
    <property type="molecule type" value="Genomic_DNA"/>
</dbReference>
<dbReference type="RefSeq" id="WP_000544030.1">
    <property type="nucleotide sequence ID" value="NC_011205.1"/>
</dbReference>
<dbReference type="SMR" id="B5FHF8"/>
<dbReference type="KEGG" id="sed:SeD_A0069"/>
<dbReference type="HOGENOM" id="CLU_047479_2_1_6"/>
<dbReference type="UniPathway" id="UPA00034">
    <property type="reaction ID" value="UER00018"/>
</dbReference>
<dbReference type="Proteomes" id="UP000008322">
    <property type="component" value="Chromosome"/>
</dbReference>
<dbReference type="GO" id="GO:0005829">
    <property type="term" value="C:cytosol"/>
    <property type="evidence" value="ECO:0007669"/>
    <property type="project" value="TreeGrafter"/>
</dbReference>
<dbReference type="GO" id="GO:0008839">
    <property type="term" value="F:4-hydroxy-tetrahydrodipicolinate reductase"/>
    <property type="evidence" value="ECO:0007669"/>
    <property type="project" value="UniProtKB-EC"/>
</dbReference>
<dbReference type="GO" id="GO:0051287">
    <property type="term" value="F:NAD binding"/>
    <property type="evidence" value="ECO:0007669"/>
    <property type="project" value="UniProtKB-UniRule"/>
</dbReference>
<dbReference type="GO" id="GO:0050661">
    <property type="term" value="F:NADP binding"/>
    <property type="evidence" value="ECO:0007669"/>
    <property type="project" value="UniProtKB-UniRule"/>
</dbReference>
<dbReference type="GO" id="GO:0016726">
    <property type="term" value="F:oxidoreductase activity, acting on CH or CH2 groups, NAD or NADP as acceptor"/>
    <property type="evidence" value="ECO:0007669"/>
    <property type="project" value="UniProtKB-UniRule"/>
</dbReference>
<dbReference type="GO" id="GO:0019877">
    <property type="term" value="P:diaminopimelate biosynthetic process"/>
    <property type="evidence" value="ECO:0007669"/>
    <property type="project" value="UniProtKB-UniRule"/>
</dbReference>
<dbReference type="GO" id="GO:0009089">
    <property type="term" value="P:lysine biosynthetic process via diaminopimelate"/>
    <property type="evidence" value="ECO:0007669"/>
    <property type="project" value="UniProtKB-UniRule"/>
</dbReference>
<dbReference type="CDD" id="cd02274">
    <property type="entry name" value="DHDPR_N"/>
    <property type="match status" value="1"/>
</dbReference>
<dbReference type="FunFam" id="3.30.360.10:FF:000004">
    <property type="entry name" value="4-hydroxy-tetrahydrodipicolinate reductase"/>
    <property type="match status" value="1"/>
</dbReference>
<dbReference type="FunFam" id="3.40.50.720:FF:000048">
    <property type="entry name" value="4-hydroxy-tetrahydrodipicolinate reductase"/>
    <property type="match status" value="1"/>
</dbReference>
<dbReference type="Gene3D" id="3.30.360.10">
    <property type="entry name" value="Dihydrodipicolinate Reductase, domain 2"/>
    <property type="match status" value="1"/>
</dbReference>
<dbReference type="Gene3D" id="3.40.50.720">
    <property type="entry name" value="NAD(P)-binding Rossmann-like Domain"/>
    <property type="match status" value="1"/>
</dbReference>
<dbReference type="HAMAP" id="MF_00102">
    <property type="entry name" value="DapB"/>
    <property type="match status" value="1"/>
</dbReference>
<dbReference type="InterPro" id="IPR022663">
    <property type="entry name" value="DapB_C"/>
</dbReference>
<dbReference type="InterPro" id="IPR000846">
    <property type="entry name" value="DapB_N"/>
</dbReference>
<dbReference type="InterPro" id="IPR022664">
    <property type="entry name" value="DapB_N_CS"/>
</dbReference>
<dbReference type="InterPro" id="IPR023940">
    <property type="entry name" value="DHDPR_bac"/>
</dbReference>
<dbReference type="InterPro" id="IPR036291">
    <property type="entry name" value="NAD(P)-bd_dom_sf"/>
</dbReference>
<dbReference type="NCBIfam" id="TIGR00036">
    <property type="entry name" value="dapB"/>
    <property type="match status" value="1"/>
</dbReference>
<dbReference type="PANTHER" id="PTHR20836:SF0">
    <property type="entry name" value="4-HYDROXY-TETRAHYDRODIPICOLINATE REDUCTASE 1, CHLOROPLASTIC-RELATED"/>
    <property type="match status" value="1"/>
</dbReference>
<dbReference type="PANTHER" id="PTHR20836">
    <property type="entry name" value="DIHYDRODIPICOLINATE REDUCTASE"/>
    <property type="match status" value="1"/>
</dbReference>
<dbReference type="Pfam" id="PF05173">
    <property type="entry name" value="DapB_C"/>
    <property type="match status" value="1"/>
</dbReference>
<dbReference type="Pfam" id="PF01113">
    <property type="entry name" value="DapB_N"/>
    <property type="match status" value="1"/>
</dbReference>
<dbReference type="PIRSF" id="PIRSF000161">
    <property type="entry name" value="DHPR"/>
    <property type="match status" value="1"/>
</dbReference>
<dbReference type="SUPFAM" id="SSF55347">
    <property type="entry name" value="Glyceraldehyde-3-phosphate dehydrogenase-like, C-terminal domain"/>
    <property type="match status" value="1"/>
</dbReference>
<dbReference type="SUPFAM" id="SSF51735">
    <property type="entry name" value="NAD(P)-binding Rossmann-fold domains"/>
    <property type="match status" value="1"/>
</dbReference>
<dbReference type="PROSITE" id="PS01298">
    <property type="entry name" value="DAPB"/>
    <property type="match status" value="1"/>
</dbReference>
<name>DAPB_SALDC</name>
<proteinExistence type="inferred from homology"/>
<reference key="1">
    <citation type="journal article" date="2011" name="J. Bacteriol.">
        <title>Comparative genomics of 28 Salmonella enterica isolates: evidence for CRISPR-mediated adaptive sublineage evolution.</title>
        <authorList>
            <person name="Fricke W.F."/>
            <person name="Mammel M.K."/>
            <person name="McDermott P.F."/>
            <person name="Tartera C."/>
            <person name="White D.G."/>
            <person name="Leclerc J.E."/>
            <person name="Ravel J."/>
            <person name="Cebula T.A."/>
        </authorList>
    </citation>
    <scope>NUCLEOTIDE SEQUENCE [LARGE SCALE GENOMIC DNA]</scope>
    <source>
        <strain>CT_02021853</strain>
    </source>
</reference>
<keyword id="KW-0028">Amino-acid biosynthesis</keyword>
<keyword id="KW-0963">Cytoplasm</keyword>
<keyword id="KW-0220">Diaminopimelate biosynthesis</keyword>
<keyword id="KW-0457">Lysine biosynthesis</keyword>
<keyword id="KW-0520">NAD</keyword>
<keyword id="KW-0521">NADP</keyword>
<keyword id="KW-0560">Oxidoreductase</keyword>
<accession>B5FHF8</accession>
<protein>
    <recommendedName>
        <fullName evidence="1">4-hydroxy-tetrahydrodipicolinate reductase</fullName>
        <shortName evidence="1">HTPA reductase</shortName>
        <ecNumber evidence="1">1.17.1.8</ecNumber>
    </recommendedName>
</protein>
<gene>
    <name evidence="1" type="primary">dapB</name>
    <name type="ordered locus">SeD_A0069</name>
</gene>
<comment type="function">
    <text evidence="1">Catalyzes the conversion of 4-hydroxy-tetrahydrodipicolinate (HTPA) to tetrahydrodipicolinate.</text>
</comment>
<comment type="catalytic activity">
    <reaction evidence="1">
        <text>(S)-2,3,4,5-tetrahydrodipicolinate + NAD(+) + H2O = (2S,4S)-4-hydroxy-2,3,4,5-tetrahydrodipicolinate + NADH + H(+)</text>
        <dbReference type="Rhea" id="RHEA:35323"/>
        <dbReference type="ChEBI" id="CHEBI:15377"/>
        <dbReference type="ChEBI" id="CHEBI:15378"/>
        <dbReference type="ChEBI" id="CHEBI:16845"/>
        <dbReference type="ChEBI" id="CHEBI:57540"/>
        <dbReference type="ChEBI" id="CHEBI:57945"/>
        <dbReference type="ChEBI" id="CHEBI:67139"/>
        <dbReference type="EC" id="1.17.1.8"/>
    </reaction>
</comment>
<comment type="catalytic activity">
    <reaction evidence="1">
        <text>(S)-2,3,4,5-tetrahydrodipicolinate + NADP(+) + H2O = (2S,4S)-4-hydroxy-2,3,4,5-tetrahydrodipicolinate + NADPH + H(+)</text>
        <dbReference type="Rhea" id="RHEA:35331"/>
        <dbReference type="ChEBI" id="CHEBI:15377"/>
        <dbReference type="ChEBI" id="CHEBI:15378"/>
        <dbReference type="ChEBI" id="CHEBI:16845"/>
        <dbReference type="ChEBI" id="CHEBI:57783"/>
        <dbReference type="ChEBI" id="CHEBI:58349"/>
        <dbReference type="ChEBI" id="CHEBI:67139"/>
        <dbReference type="EC" id="1.17.1.8"/>
    </reaction>
</comment>
<comment type="pathway">
    <text evidence="1">Amino-acid biosynthesis; L-lysine biosynthesis via DAP pathway; (S)-tetrahydrodipicolinate from L-aspartate: step 4/4.</text>
</comment>
<comment type="subunit">
    <text evidence="1">Homotetramer.</text>
</comment>
<comment type="subcellular location">
    <subcellularLocation>
        <location evidence="1">Cytoplasm</location>
    </subcellularLocation>
</comment>
<comment type="similarity">
    <text evidence="1">Belongs to the DapB family.</text>
</comment>
<comment type="caution">
    <text evidence="2">Was originally thought to be a dihydrodipicolinate reductase (DHDPR), catalyzing the conversion of dihydrodipicolinate to tetrahydrodipicolinate. However, it was shown in E.coli that the substrate of the enzymatic reaction is not dihydrodipicolinate (DHDP) but in fact (2S,4S)-4-hydroxy-2,3,4,5-tetrahydrodipicolinic acid (HTPA), the product released by the DapA-catalyzed reaction.</text>
</comment>